<proteinExistence type="inferred from homology"/>
<reference key="1">
    <citation type="journal article" date="2005" name="Proc. Natl. Acad. Sci. U.S.A.">
        <title>Rapid electrostatic evolution at the binding site for cytochrome c on cytochrome c oxidase in anthropoid primates.</title>
        <authorList>
            <person name="Schmidt T.R."/>
            <person name="Wildman D.E."/>
            <person name="Uddin M."/>
            <person name="Opazo J.C."/>
            <person name="Goodman M."/>
            <person name="Grossman L.I."/>
        </authorList>
    </citation>
    <scope>NUCLEOTIDE SEQUENCE [GENOMIC DNA]</scope>
</reference>
<accession>Q52V08</accession>
<keyword id="KW-0007">Acetylation</keyword>
<keyword id="KW-0053">Apoptosis</keyword>
<keyword id="KW-0249">Electron transport</keyword>
<keyword id="KW-0349">Heme</keyword>
<keyword id="KW-0408">Iron</keyword>
<keyword id="KW-0479">Metal-binding</keyword>
<keyword id="KW-0496">Mitochondrion</keyword>
<keyword id="KW-0597">Phosphoprotein</keyword>
<keyword id="KW-0679">Respiratory chain</keyword>
<keyword id="KW-0813">Transport</keyword>
<gene>
    <name type="primary">CYCS</name>
</gene>
<evidence type="ECO:0000250" key="1"/>
<evidence type="ECO:0000250" key="2">
    <source>
        <dbReference type="UniProtKB" id="P62894"/>
    </source>
</evidence>
<evidence type="ECO:0000250" key="3">
    <source>
        <dbReference type="UniProtKB" id="P62897"/>
    </source>
</evidence>
<evidence type="ECO:0000255" key="4">
    <source>
        <dbReference type="PROSITE-ProRule" id="PRU00433"/>
    </source>
</evidence>
<evidence type="ECO:0000305" key="5"/>
<comment type="function">
    <text evidence="1">Electron carrier protein. The oxidized form of the cytochrome c heme group can accept an electron from the heme group of the cytochrome c1 subunit of cytochrome reductase. Cytochrome c then transfers this electron to the cytochrome oxidase complex, the final protein carrier in the mitochondrial electron-transport chain (By similarity).</text>
</comment>
<comment type="function">
    <text evidence="1">Plays a role in apoptosis. Suppression of the anti-apoptotic members or activation of the pro-apoptotic members of the Bcl-2 family leads to altered mitochondrial membrane permeability resulting in release of cytochrome c into the cytosol. Binding of cytochrome c to Apaf-1 triggers the activation of caspase-9, which then accelerates apoptosis by activating other caspases (By similarity).</text>
</comment>
<comment type="subcellular location">
    <subcellularLocation>
        <location evidence="1">Mitochondrion intermembrane space</location>
    </subcellularLocation>
    <text evidence="1">Loosely associated with the inner membrane.</text>
</comment>
<comment type="PTM">
    <text evidence="1">Binds 1 heme c group covalently per subunit.</text>
</comment>
<comment type="PTM">
    <text evidence="1">Phosphorylation at Tyr-49 and Tyr-98 both reduce by half the turnover in the reaction with cytochrome c oxidase, down-regulating mitochondrial respiration.</text>
</comment>
<comment type="similarity">
    <text evidence="5">Belongs to the cytochrome c family.</text>
</comment>
<comment type="online information" name="Protein Spotlight">
    <link uri="https://www.proteinspotlight.org/back_issues/076"/>
    <text>Life shuttle - Issue 76 of November 2006</text>
</comment>
<protein>
    <recommendedName>
        <fullName>Cytochrome c</fullName>
    </recommendedName>
</protein>
<sequence>MGDVEKGKKIFIMKCSQCHTVEKGGKHKTGPNLHGLFGRKTGQAPGYSYTAANKNKGITWGEDTLMEYLENPKKYIPGTKMIFVGIKKKEERADLIAYLKKATNE</sequence>
<name>CYC_MACSY</name>
<dbReference type="EMBL" id="AY918495">
    <property type="protein sequence ID" value="AAY17034.1"/>
    <property type="molecule type" value="Genomic_DNA"/>
</dbReference>
<dbReference type="BMRB" id="Q52V08"/>
<dbReference type="SMR" id="Q52V08"/>
<dbReference type="GO" id="GO:0005758">
    <property type="term" value="C:mitochondrial intermembrane space"/>
    <property type="evidence" value="ECO:0007669"/>
    <property type="project" value="UniProtKB-SubCell"/>
</dbReference>
<dbReference type="GO" id="GO:0009055">
    <property type="term" value="F:electron transfer activity"/>
    <property type="evidence" value="ECO:0007669"/>
    <property type="project" value="InterPro"/>
</dbReference>
<dbReference type="GO" id="GO:0020037">
    <property type="term" value="F:heme binding"/>
    <property type="evidence" value="ECO:0007669"/>
    <property type="project" value="InterPro"/>
</dbReference>
<dbReference type="GO" id="GO:0046872">
    <property type="term" value="F:metal ion binding"/>
    <property type="evidence" value="ECO:0007669"/>
    <property type="project" value="UniProtKB-KW"/>
</dbReference>
<dbReference type="GO" id="GO:0006915">
    <property type="term" value="P:apoptotic process"/>
    <property type="evidence" value="ECO:0007669"/>
    <property type="project" value="UniProtKB-KW"/>
</dbReference>
<dbReference type="FunFam" id="1.10.760.10:FF:000008">
    <property type="entry name" value="Cytochrome c"/>
    <property type="match status" value="1"/>
</dbReference>
<dbReference type="Gene3D" id="1.10.760.10">
    <property type="entry name" value="Cytochrome c-like domain"/>
    <property type="match status" value="1"/>
</dbReference>
<dbReference type="InterPro" id="IPR009056">
    <property type="entry name" value="Cyt_c-like_dom"/>
</dbReference>
<dbReference type="InterPro" id="IPR036909">
    <property type="entry name" value="Cyt_c-like_dom_sf"/>
</dbReference>
<dbReference type="InterPro" id="IPR002327">
    <property type="entry name" value="Cyt_c_1A/1B"/>
</dbReference>
<dbReference type="PANTHER" id="PTHR11961">
    <property type="entry name" value="CYTOCHROME C"/>
    <property type="match status" value="1"/>
</dbReference>
<dbReference type="Pfam" id="PF00034">
    <property type="entry name" value="Cytochrom_C"/>
    <property type="match status" value="1"/>
</dbReference>
<dbReference type="PRINTS" id="PR00604">
    <property type="entry name" value="CYTCHRMECIAB"/>
</dbReference>
<dbReference type="SUPFAM" id="SSF46626">
    <property type="entry name" value="Cytochrome c"/>
    <property type="match status" value="1"/>
</dbReference>
<dbReference type="PROSITE" id="PS51007">
    <property type="entry name" value="CYTC"/>
    <property type="match status" value="1"/>
</dbReference>
<organism>
    <name type="scientific">Macaca sylvanus</name>
    <name type="common">Barbary macaque</name>
    <dbReference type="NCBI Taxonomy" id="9546"/>
    <lineage>
        <taxon>Eukaryota</taxon>
        <taxon>Metazoa</taxon>
        <taxon>Chordata</taxon>
        <taxon>Craniata</taxon>
        <taxon>Vertebrata</taxon>
        <taxon>Euteleostomi</taxon>
        <taxon>Mammalia</taxon>
        <taxon>Eutheria</taxon>
        <taxon>Euarchontoglires</taxon>
        <taxon>Primates</taxon>
        <taxon>Haplorrhini</taxon>
        <taxon>Catarrhini</taxon>
        <taxon>Cercopithecidae</taxon>
        <taxon>Cercopithecinae</taxon>
        <taxon>Macaca</taxon>
    </lineage>
</organism>
<feature type="initiator methionine" description="Removed" evidence="2">
    <location>
        <position position="1"/>
    </location>
</feature>
<feature type="chain" id="PRO_0000108222" description="Cytochrome c">
    <location>
        <begin position="2"/>
        <end position="105"/>
    </location>
</feature>
<feature type="binding site" description="covalent" evidence="4">
    <location>
        <position position="15"/>
    </location>
    <ligand>
        <name>heme c</name>
        <dbReference type="ChEBI" id="CHEBI:61717"/>
    </ligand>
</feature>
<feature type="binding site" description="covalent" evidence="4">
    <location>
        <position position="18"/>
    </location>
    <ligand>
        <name>heme c</name>
        <dbReference type="ChEBI" id="CHEBI:61717"/>
    </ligand>
</feature>
<feature type="binding site" description="axial binding residue" evidence="4">
    <location>
        <position position="19"/>
    </location>
    <ligand>
        <name>heme c</name>
        <dbReference type="ChEBI" id="CHEBI:61717"/>
    </ligand>
    <ligandPart>
        <name>Fe</name>
        <dbReference type="ChEBI" id="CHEBI:18248"/>
    </ligandPart>
</feature>
<feature type="binding site" description="axial binding residue" evidence="4">
    <location>
        <position position="81"/>
    </location>
    <ligand>
        <name>heme c</name>
        <dbReference type="ChEBI" id="CHEBI:61717"/>
    </ligand>
    <ligandPart>
        <name>Fe</name>
        <dbReference type="ChEBI" id="CHEBI:18248"/>
    </ligandPart>
</feature>
<feature type="modified residue" description="N-acetylglycine" evidence="2">
    <location>
        <position position="2"/>
    </location>
</feature>
<feature type="modified residue" description="Phosphotyrosine" evidence="2">
    <location>
        <position position="49"/>
    </location>
</feature>
<feature type="modified residue" description="N6-succinyllysine" evidence="3">
    <location>
        <position position="56"/>
    </location>
</feature>
<feature type="modified residue" description="N6-acetyllysine; alternate" evidence="3">
    <location>
        <position position="73"/>
    </location>
</feature>
<feature type="modified residue" description="N6-succinyllysine; alternate" evidence="3">
    <location>
        <position position="73"/>
    </location>
</feature>
<feature type="modified residue" description="Phosphotyrosine" evidence="2">
    <location>
        <position position="98"/>
    </location>
</feature>
<feature type="modified residue" description="N6-acetyllysine" evidence="3">
    <location>
        <position position="100"/>
    </location>
</feature>